<feature type="chain" id="PRO_0000238079" description="33 kDa chaperonin">
    <location>
        <begin position="1"/>
        <end position="292"/>
    </location>
</feature>
<feature type="disulfide bond" description="Redox-active" evidence="1">
    <location>
        <begin position="229"/>
        <end position="231"/>
    </location>
</feature>
<feature type="disulfide bond" description="Redox-active" evidence="1">
    <location>
        <begin position="262"/>
        <end position="265"/>
    </location>
</feature>
<keyword id="KW-0143">Chaperone</keyword>
<keyword id="KW-0963">Cytoplasm</keyword>
<keyword id="KW-1015">Disulfide bond</keyword>
<keyword id="KW-0676">Redox-active center</keyword>
<keyword id="KW-1185">Reference proteome</keyword>
<keyword id="KW-0862">Zinc</keyword>
<name>HSLO_PHOPR</name>
<dbReference type="EMBL" id="CR378674">
    <property type="protein sequence ID" value="CAG21755.1"/>
    <property type="molecule type" value="Genomic_DNA"/>
</dbReference>
<dbReference type="RefSeq" id="WP_011219996.1">
    <property type="nucleotide sequence ID" value="NC_006370.1"/>
</dbReference>
<dbReference type="SMR" id="Q6LLS3"/>
<dbReference type="STRING" id="298386.PBPRA3484"/>
<dbReference type="KEGG" id="ppr:PBPRA3484"/>
<dbReference type="eggNOG" id="COG1281">
    <property type="taxonomic scope" value="Bacteria"/>
</dbReference>
<dbReference type="HOGENOM" id="CLU_054493_0_0_6"/>
<dbReference type="Proteomes" id="UP000000593">
    <property type="component" value="Chromosome 1"/>
</dbReference>
<dbReference type="GO" id="GO:0005737">
    <property type="term" value="C:cytoplasm"/>
    <property type="evidence" value="ECO:0007669"/>
    <property type="project" value="UniProtKB-SubCell"/>
</dbReference>
<dbReference type="GO" id="GO:0044183">
    <property type="term" value="F:protein folding chaperone"/>
    <property type="evidence" value="ECO:0007669"/>
    <property type="project" value="TreeGrafter"/>
</dbReference>
<dbReference type="GO" id="GO:0051082">
    <property type="term" value="F:unfolded protein binding"/>
    <property type="evidence" value="ECO:0007669"/>
    <property type="project" value="UniProtKB-UniRule"/>
</dbReference>
<dbReference type="GO" id="GO:0042026">
    <property type="term" value="P:protein refolding"/>
    <property type="evidence" value="ECO:0007669"/>
    <property type="project" value="TreeGrafter"/>
</dbReference>
<dbReference type="CDD" id="cd00498">
    <property type="entry name" value="Hsp33"/>
    <property type="match status" value="1"/>
</dbReference>
<dbReference type="Gene3D" id="1.10.287.480">
    <property type="entry name" value="helix hairpin bin"/>
    <property type="match status" value="1"/>
</dbReference>
<dbReference type="Gene3D" id="3.55.30.10">
    <property type="entry name" value="Hsp33 domain"/>
    <property type="match status" value="1"/>
</dbReference>
<dbReference type="Gene3D" id="3.90.1280.10">
    <property type="entry name" value="HSP33 redox switch-like"/>
    <property type="match status" value="1"/>
</dbReference>
<dbReference type="HAMAP" id="MF_00117">
    <property type="entry name" value="HslO"/>
    <property type="match status" value="1"/>
</dbReference>
<dbReference type="InterPro" id="IPR000397">
    <property type="entry name" value="Heat_shock_Hsp33"/>
</dbReference>
<dbReference type="InterPro" id="IPR016154">
    <property type="entry name" value="Heat_shock_Hsp33_C"/>
</dbReference>
<dbReference type="InterPro" id="IPR016153">
    <property type="entry name" value="Heat_shock_Hsp33_N"/>
</dbReference>
<dbReference type="InterPro" id="IPR023212">
    <property type="entry name" value="Hsp33_helix_hairpin_bin_dom_sf"/>
</dbReference>
<dbReference type="NCBIfam" id="NF001033">
    <property type="entry name" value="PRK00114.1"/>
    <property type="match status" value="1"/>
</dbReference>
<dbReference type="PANTHER" id="PTHR30111">
    <property type="entry name" value="33 KDA CHAPERONIN"/>
    <property type="match status" value="1"/>
</dbReference>
<dbReference type="PANTHER" id="PTHR30111:SF1">
    <property type="entry name" value="33 KDA CHAPERONIN"/>
    <property type="match status" value="1"/>
</dbReference>
<dbReference type="Pfam" id="PF01430">
    <property type="entry name" value="HSP33"/>
    <property type="match status" value="1"/>
</dbReference>
<dbReference type="PIRSF" id="PIRSF005261">
    <property type="entry name" value="Heat_shock_Hsp33"/>
    <property type="match status" value="1"/>
</dbReference>
<dbReference type="SUPFAM" id="SSF64397">
    <property type="entry name" value="Hsp33 domain"/>
    <property type="match status" value="1"/>
</dbReference>
<dbReference type="SUPFAM" id="SSF118352">
    <property type="entry name" value="HSP33 redox switch-like"/>
    <property type="match status" value="1"/>
</dbReference>
<accession>Q6LLS3</accession>
<sequence>MTNDNLYRYLFEGVSVRGELVQLGNTYQQIIASKEYPAPVQKLLGELLVATSLLTATLKFEGSITVQLQGDGPVRLAVINGDHEQKMRGVARWEGEVPTDGTIHDVIGKGHLVITITPTKGDRYQGVVGLEGDTLAESLEGYFANSEQLKTRIILRTGEFEGNAKAAGMLLQILPDGQGQEGDFEHLEQLTETVKDEELFGLDAQDVLYRLYHQEEVKLFDPQSVEFHCGCSRERSASAICSIERIEVEKIIADEGKVSLHCDYCGTSYDFDSIDVAALHENAAKNDRDQVH</sequence>
<gene>
    <name evidence="1" type="primary">hslO</name>
    <name type="ordered locus">PBPRA3484</name>
</gene>
<comment type="function">
    <text evidence="1">Redox regulated molecular chaperone. Protects both thermally unfolding and oxidatively damaged proteins from irreversible aggregation. Plays an important role in the bacterial defense system toward oxidative stress.</text>
</comment>
<comment type="subcellular location">
    <subcellularLocation>
        <location evidence="1">Cytoplasm</location>
    </subcellularLocation>
</comment>
<comment type="PTM">
    <text evidence="1">Under oxidizing conditions two disulfide bonds are formed involving the reactive cysteines. Under reducing conditions zinc is bound to the reactive cysteines and the protein is inactive.</text>
</comment>
<comment type="similarity">
    <text evidence="1">Belongs to the HSP33 family.</text>
</comment>
<proteinExistence type="inferred from homology"/>
<reference key="1">
    <citation type="journal article" date="2005" name="Science">
        <title>Life at depth: Photobacterium profundum genome sequence and expression analysis.</title>
        <authorList>
            <person name="Vezzi A."/>
            <person name="Campanaro S."/>
            <person name="D'Angelo M."/>
            <person name="Simonato F."/>
            <person name="Vitulo N."/>
            <person name="Lauro F.M."/>
            <person name="Cestaro A."/>
            <person name="Malacrida G."/>
            <person name="Simionati B."/>
            <person name="Cannata N."/>
            <person name="Romualdi C."/>
            <person name="Bartlett D.H."/>
            <person name="Valle G."/>
        </authorList>
    </citation>
    <scope>NUCLEOTIDE SEQUENCE [LARGE SCALE GENOMIC DNA]</scope>
    <source>
        <strain>ATCC BAA-1253 / SS9</strain>
    </source>
</reference>
<organism>
    <name type="scientific">Photobacterium profundum (strain SS9)</name>
    <dbReference type="NCBI Taxonomy" id="298386"/>
    <lineage>
        <taxon>Bacteria</taxon>
        <taxon>Pseudomonadati</taxon>
        <taxon>Pseudomonadota</taxon>
        <taxon>Gammaproteobacteria</taxon>
        <taxon>Vibrionales</taxon>
        <taxon>Vibrionaceae</taxon>
        <taxon>Photobacterium</taxon>
    </lineage>
</organism>
<evidence type="ECO:0000255" key="1">
    <source>
        <dbReference type="HAMAP-Rule" id="MF_00117"/>
    </source>
</evidence>
<protein>
    <recommendedName>
        <fullName evidence="1">33 kDa chaperonin</fullName>
    </recommendedName>
    <alternativeName>
        <fullName evidence="1">Heat shock protein 33 homolog</fullName>
        <shortName evidence="1">HSP33</shortName>
    </alternativeName>
</protein>